<proteinExistence type="inferred from homology"/>
<organism>
    <name type="scientific">Staphylococcus carnosus (strain TM300)</name>
    <dbReference type="NCBI Taxonomy" id="396513"/>
    <lineage>
        <taxon>Bacteria</taxon>
        <taxon>Bacillati</taxon>
        <taxon>Bacillota</taxon>
        <taxon>Bacilli</taxon>
        <taxon>Bacillales</taxon>
        <taxon>Staphylococcaceae</taxon>
        <taxon>Staphylococcus</taxon>
    </lineage>
</organism>
<protein>
    <recommendedName>
        <fullName evidence="1">Probable glycine dehydrogenase (decarboxylating) subunit 1</fullName>
        <ecNumber evidence="1">1.4.4.2</ecNumber>
    </recommendedName>
    <alternativeName>
        <fullName evidence="1">Glycine cleavage system P-protein subunit 1</fullName>
    </alternativeName>
    <alternativeName>
        <fullName evidence="1">Glycine decarboxylase subunit 1</fullName>
    </alternativeName>
    <alternativeName>
        <fullName evidence="1">Glycine dehydrogenase (aminomethyl-transferring) subunit 1</fullName>
    </alternativeName>
</protein>
<sequence length="448" mass="49668">MSHRYIPLTEKDKQEMLETIGANSIEELFGDVPKEILLDRELDIPNGEDETTLLKRLSRIAKKNITKEDYTSFLGAGVYDHYTPAVVDAMISRSEFYTAYTPYQPEISQGELQAIFEFQTLICELTGMDVANSSMYDGITAFAEACILAFSQTKKNKIVVSKGLHYQALQVLHTYSKIRNDYEIVEVDLDGTVTDLEKLEDAIDDETAAVAVQYPNFYGSIEDLEKIKSLIKNKKTLFIVYTNPLSLGLLTPPGDFGADIVVGDTQPFGIPAQFGGPHCGFFATTKKLMRKVPGRLVGQTEDDHGNRGFVLTLQAREQHIRRDKATSNICSNQALNALASSIAMSALGKQGLQDIAVQNFENANYAKNQFKDAGIEVLPGTSFNEFVIKLDKPVKEVNDKLLEEGIIGGFDLSEVNEEFGQAMLIAVTELRTKDEIDTFVKKVGEING</sequence>
<feature type="chain" id="PRO_1000147991" description="Probable glycine dehydrogenase (decarboxylating) subunit 1">
    <location>
        <begin position="1"/>
        <end position="448"/>
    </location>
</feature>
<dbReference type="EC" id="1.4.4.2" evidence="1"/>
<dbReference type="EMBL" id="AM295250">
    <property type="protein sequence ID" value="CAL28068.1"/>
    <property type="molecule type" value="Genomic_DNA"/>
</dbReference>
<dbReference type="RefSeq" id="WP_015900409.1">
    <property type="nucleotide sequence ID" value="NC_012121.1"/>
</dbReference>
<dbReference type="SMR" id="B9DNN6"/>
<dbReference type="GeneID" id="93793584"/>
<dbReference type="KEGG" id="sca:SCA_1160"/>
<dbReference type="eggNOG" id="COG0403">
    <property type="taxonomic scope" value="Bacteria"/>
</dbReference>
<dbReference type="HOGENOM" id="CLU_004620_0_2_9"/>
<dbReference type="OrthoDB" id="9771867at2"/>
<dbReference type="BioCyc" id="SCAR396513:SCA_RS05805-MONOMER"/>
<dbReference type="Proteomes" id="UP000000444">
    <property type="component" value="Chromosome"/>
</dbReference>
<dbReference type="GO" id="GO:0004375">
    <property type="term" value="F:glycine dehydrogenase (decarboxylating) activity"/>
    <property type="evidence" value="ECO:0007669"/>
    <property type="project" value="UniProtKB-EC"/>
</dbReference>
<dbReference type="GO" id="GO:0019464">
    <property type="term" value="P:glycine decarboxylation via glycine cleavage system"/>
    <property type="evidence" value="ECO:0007669"/>
    <property type="project" value="UniProtKB-UniRule"/>
</dbReference>
<dbReference type="GO" id="GO:0009116">
    <property type="term" value="P:nucleoside metabolic process"/>
    <property type="evidence" value="ECO:0007669"/>
    <property type="project" value="InterPro"/>
</dbReference>
<dbReference type="CDD" id="cd00613">
    <property type="entry name" value="GDC-P"/>
    <property type="match status" value="1"/>
</dbReference>
<dbReference type="Gene3D" id="3.90.1150.10">
    <property type="entry name" value="Aspartate Aminotransferase, domain 1"/>
    <property type="match status" value="1"/>
</dbReference>
<dbReference type="Gene3D" id="3.40.640.10">
    <property type="entry name" value="Type I PLP-dependent aspartate aminotransferase-like (Major domain)"/>
    <property type="match status" value="1"/>
</dbReference>
<dbReference type="HAMAP" id="MF_00712">
    <property type="entry name" value="GcvPA"/>
    <property type="match status" value="1"/>
</dbReference>
<dbReference type="InterPro" id="IPR023010">
    <property type="entry name" value="GcvPA"/>
</dbReference>
<dbReference type="InterPro" id="IPR049315">
    <property type="entry name" value="GDC-P_N"/>
</dbReference>
<dbReference type="InterPro" id="IPR020581">
    <property type="entry name" value="GDC_P"/>
</dbReference>
<dbReference type="InterPro" id="IPR015424">
    <property type="entry name" value="PyrdxlP-dep_Trfase"/>
</dbReference>
<dbReference type="InterPro" id="IPR015421">
    <property type="entry name" value="PyrdxlP-dep_Trfase_major"/>
</dbReference>
<dbReference type="InterPro" id="IPR015422">
    <property type="entry name" value="PyrdxlP-dep_Trfase_small"/>
</dbReference>
<dbReference type="NCBIfam" id="NF001696">
    <property type="entry name" value="PRK00451.1"/>
    <property type="match status" value="1"/>
</dbReference>
<dbReference type="PANTHER" id="PTHR42806">
    <property type="entry name" value="GLYCINE CLEAVAGE SYSTEM P-PROTEIN"/>
    <property type="match status" value="1"/>
</dbReference>
<dbReference type="PANTHER" id="PTHR42806:SF1">
    <property type="entry name" value="GLYCINE DEHYDROGENASE (DECARBOXYLATING)"/>
    <property type="match status" value="1"/>
</dbReference>
<dbReference type="Pfam" id="PF02347">
    <property type="entry name" value="GDC-P"/>
    <property type="match status" value="1"/>
</dbReference>
<dbReference type="PIRSF" id="PIRSF006815">
    <property type="entry name" value="GcvPA"/>
    <property type="match status" value="1"/>
</dbReference>
<dbReference type="SUPFAM" id="SSF53383">
    <property type="entry name" value="PLP-dependent transferases"/>
    <property type="match status" value="1"/>
</dbReference>
<gene>
    <name evidence="1" type="primary">gcvPA</name>
    <name type="ordered locus">Sca_1160</name>
</gene>
<name>GCSPA_STACT</name>
<accession>B9DNN6</accession>
<evidence type="ECO:0000255" key="1">
    <source>
        <dbReference type="HAMAP-Rule" id="MF_00712"/>
    </source>
</evidence>
<reference key="1">
    <citation type="journal article" date="2009" name="Appl. Environ. Microbiol.">
        <title>Genome analysis of the meat starter culture bacterium Staphylococcus carnosus TM300.</title>
        <authorList>
            <person name="Rosenstein R."/>
            <person name="Nerz C."/>
            <person name="Biswas L."/>
            <person name="Resch A."/>
            <person name="Raddatz G."/>
            <person name="Schuster S.C."/>
            <person name="Goetz F."/>
        </authorList>
    </citation>
    <scope>NUCLEOTIDE SEQUENCE [LARGE SCALE GENOMIC DNA]</scope>
    <source>
        <strain>TM300</strain>
    </source>
</reference>
<comment type="function">
    <text evidence="1">The glycine cleavage system catalyzes the degradation of glycine. The P protein binds the alpha-amino group of glycine through its pyridoxal phosphate cofactor; CO(2) is released and the remaining methylamine moiety is then transferred to the lipoamide cofactor of the H protein.</text>
</comment>
<comment type="catalytic activity">
    <reaction evidence="1">
        <text>N(6)-[(R)-lipoyl]-L-lysyl-[glycine-cleavage complex H protein] + glycine + H(+) = N(6)-[(R)-S(8)-aminomethyldihydrolipoyl]-L-lysyl-[glycine-cleavage complex H protein] + CO2</text>
        <dbReference type="Rhea" id="RHEA:24304"/>
        <dbReference type="Rhea" id="RHEA-COMP:10494"/>
        <dbReference type="Rhea" id="RHEA-COMP:10495"/>
        <dbReference type="ChEBI" id="CHEBI:15378"/>
        <dbReference type="ChEBI" id="CHEBI:16526"/>
        <dbReference type="ChEBI" id="CHEBI:57305"/>
        <dbReference type="ChEBI" id="CHEBI:83099"/>
        <dbReference type="ChEBI" id="CHEBI:83143"/>
        <dbReference type="EC" id="1.4.4.2"/>
    </reaction>
</comment>
<comment type="subunit">
    <text evidence="1">The glycine cleavage system is composed of four proteins: P, T, L and H. In this organism, the P 'protein' is a heterodimer of two subunits.</text>
</comment>
<comment type="similarity">
    <text evidence="1">Belongs to the GcvP family. N-terminal subunit subfamily.</text>
</comment>
<keyword id="KW-0560">Oxidoreductase</keyword>
<keyword id="KW-1185">Reference proteome</keyword>